<accession>P82218</accession>
<organism>
    <name type="scientific">Bombyx mori</name>
    <name type="common">Silk moth</name>
    <dbReference type="NCBI Taxonomy" id="7091"/>
    <lineage>
        <taxon>Eukaryota</taxon>
        <taxon>Metazoa</taxon>
        <taxon>Ecdysozoa</taxon>
        <taxon>Arthropoda</taxon>
        <taxon>Hexapoda</taxon>
        <taxon>Insecta</taxon>
        <taxon>Pterygota</taxon>
        <taxon>Neoptera</taxon>
        <taxon>Endopterygota</taxon>
        <taxon>Lepidoptera</taxon>
        <taxon>Glossata</taxon>
        <taxon>Ditrysia</taxon>
        <taxon>Bombycoidea</taxon>
        <taxon>Bombycidae</taxon>
        <taxon>Bombycinae</taxon>
        <taxon>Bombyx</taxon>
    </lineage>
</organism>
<feature type="chain" id="PRO_0000274540" description="Unknown protein 20 from 2D-PAGE">
    <location>
        <begin position="1"/>
        <end position="22" status="greater than"/>
    </location>
</feature>
<feature type="non-terminal residue" evidence="2">
    <location>
        <position position="22"/>
    </location>
</feature>
<reference evidence="3" key="1">
    <citation type="journal article" date="2001" name="Yi Chuan Xue Bao">
        <title>Protein database for several tissues derived from five instar of silkworm.</title>
        <authorList>
            <person name="Zhong B.-X."/>
        </authorList>
    </citation>
    <scope>PROTEIN SEQUENCE</scope>
    <source>
        <strain evidence="1">Xinhang X Keming</strain>
        <tissue evidence="1">Body wall</tissue>
        <tissue evidence="1">Fat body</tissue>
    </source>
</reference>
<name>UP20_BOMMO</name>
<evidence type="ECO:0000269" key="1">
    <source>
    </source>
</evidence>
<evidence type="ECO:0000303" key="2">
    <source>
    </source>
</evidence>
<evidence type="ECO:0000305" key="3"/>
<dbReference type="InParanoid" id="P82218"/>
<dbReference type="Proteomes" id="UP000005204">
    <property type="component" value="Unassembled WGS sequence"/>
</dbReference>
<proteinExistence type="evidence at protein level"/>
<sequence length="22" mass="2302">VIGVXVPLFKGKSQLLDPTXXG</sequence>
<protein>
    <recommendedName>
        <fullName>Unknown protein 20 from 2D-PAGE</fullName>
    </recommendedName>
</protein>
<keyword id="KW-0903">Direct protein sequencing</keyword>
<keyword id="KW-1185">Reference proteome</keyword>